<keyword id="KW-0002">3D-structure</keyword>
<keyword id="KW-0235">DNA replication</keyword>
<keyword id="KW-0238">DNA-binding</keyword>
<keyword id="KW-0239">DNA-directed DNA polymerase</keyword>
<keyword id="KW-0269">Exonuclease</keyword>
<keyword id="KW-0378">Hydrolase</keyword>
<keyword id="KW-0460">Magnesium</keyword>
<keyword id="KW-0479">Metal-binding</keyword>
<keyword id="KW-0511">Multifunctional enzyme</keyword>
<keyword id="KW-0540">Nuclease</keyword>
<keyword id="KW-0548">Nucleotidyltransferase</keyword>
<keyword id="KW-1185">Reference proteome</keyword>
<keyword id="KW-0808">Transferase</keyword>
<keyword id="KW-1194">Viral DNA replication</keyword>
<reference key="1">
    <citation type="journal article" date="1988" name="J. Biol. Chem.">
        <title>Primary structure of T4 DNA polymerase. Evolutionary relatedness to eucaryotic and other procaryotic DNA polymerases.</title>
        <authorList>
            <person name="Spicer E.K."/>
            <person name="Rush J."/>
            <person name="Fung C."/>
            <person name="Reha-Krantz L.J."/>
            <person name="Karam J.D."/>
            <person name="Konigsberg W.H."/>
        </authorList>
    </citation>
    <scope>NUCLEOTIDE SEQUENCE [GENOMIC DNA]</scope>
</reference>
<reference key="2">
    <citation type="journal article" date="1988" name="Proc. Natl. Acad. Sci. U.S.A.">
        <title>DNA polymerase of bacteriophage T4 is an autogenous translational repressor.</title>
        <authorList>
            <person name="Andrake M."/>
            <person name="Guild N."/>
            <person name="Hsu T."/>
            <person name="Gold L."/>
            <person name="Tuerk C."/>
            <person name="Karam J."/>
        </authorList>
    </citation>
    <scope>NUCLEOTIDE SEQUENCE [GENOMIC DNA]</scope>
</reference>
<reference key="3">
    <citation type="journal article" date="2003" name="Microbiol. Mol. Biol. Rev.">
        <title>Bacteriophage T4 genome.</title>
        <authorList>
            <person name="Miller E.S."/>
            <person name="Kutter E."/>
            <person name="Mosig G."/>
            <person name="Arisaka F."/>
            <person name="Kunisawa T."/>
            <person name="Ruger W."/>
        </authorList>
    </citation>
    <scope>NUCLEOTIDE SEQUENCE [LARGE SCALE GENOMIC DNA]</scope>
</reference>
<reference key="4">
    <citation type="journal article" date="1988" name="Eur. J. Biochem.">
        <title>Deoxycytidylate hydroxymethylase gene of bacteriophage T4. Nucleotide sequence determination and over-expression of the gene.</title>
        <authorList>
            <person name="Lamm N."/>
            <person name="Wang Y."/>
            <person name="Mathews C.K."/>
            <person name="Rueger W."/>
        </authorList>
    </citation>
    <scope>NUCLEOTIDE SEQUENCE [GENOMIC DNA] OF 338-898</scope>
</reference>
<reference key="5">
    <citation type="journal article" date="1992" name="Biochemistry">
        <title>Kinetic characterization of the polymerase and exonuclease activities of the gene 43 protein of bacteriophage T4.</title>
        <authorList>
            <person name="Capson T.L."/>
            <person name="Peliska J.A."/>
            <person name="Kaboord B.F."/>
            <person name="Frey M.W."/>
            <person name="Lively C."/>
            <person name="Dahlberg M."/>
            <person name="Benkovic S.J."/>
        </authorList>
    </citation>
    <scope>CATALYTIC ACTIVITY</scope>
    <scope>FUNCTION</scope>
</reference>
<reference key="6">
    <citation type="journal article" date="1993" name="Proc. Natl. Acad. Sci. U.S.A.">
        <title>Assembly of a functional replication complex without ATP hydrolysis: a direct interaction of bacteriophage T4 gp45 with T4 DNA polymerase.</title>
        <authorList>
            <person name="Reddy M.K."/>
            <person name="Weitzel S.E."/>
            <person name="von Hippel P.H."/>
        </authorList>
    </citation>
    <scope>INTERACTION WITH THE POLYMERASE CLAMP</scope>
</reference>
<reference key="7">
    <citation type="journal article" date="1993" name="J. Biol. Chem.">
        <title>Genetic and biochemical studies of bacteriophage T4 DNA polymerase 3'--&gt;5'-exonuclease activity.</title>
        <authorList>
            <person name="Reha-Krantz L.J."/>
            <person name="Nonay R.L."/>
        </authorList>
    </citation>
    <scope>MUTAGENESIS OF ASP-112; GLU-114; ASP-219 AND ASP-324</scope>
    <scope>CATALYTIC ACTIVITY</scope>
</reference>
<reference key="8">
    <citation type="journal article" date="1995" name="J. Biol. Chem.">
        <title>Modular organization of T4 DNA polymerase. Evidence from phylogenetics.</title>
        <authorList>
            <person name="Wang C.C."/>
            <person name="Yeh L.-S."/>
            <person name="Karam J.D."/>
        </authorList>
    </citation>
    <scope>DOMAIN</scope>
</reference>
<reference key="9">
    <citation type="journal article" date="1996" name="Proc. Natl. Acad. Sci. U.S.A.">
        <title>The carboxyl terminus of the bacteriophage T4 DNA polymerase is required for holoenzyme complex formation.</title>
        <authorList>
            <person name="Berdis A.J."/>
            <person name="Soumillion P."/>
            <person name="Benkovic S.J."/>
        </authorList>
    </citation>
    <scope>INTERACTION WITH THE POLYMERASE CLAMP</scope>
</reference>
<reference key="10">
    <citation type="journal article" date="1998" name="Biochemistry">
        <title>Exonuclease-polymerase active site partitioning of primer-template DNA strands and equilibrium Mg2+ binding properties of bacteriophage T4 DNA polymerase.</title>
        <authorList>
            <person name="Beechem J.M."/>
            <person name="Otto M.R."/>
            <person name="Bloom L.B."/>
            <person name="Eritja R."/>
            <person name="Reha-Krantz L.J."/>
            <person name="Goodman M.F."/>
        </authorList>
    </citation>
    <scope>COFACTOR</scope>
</reference>
<reference key="11">
    <citation type="journal article" date="2005" name="Biochemistry">
        <title>Interaction between the T4 helicase loading protein (gp59) and the DNA polymerase (gp43): unlocking of the gp59-gp43-DNA complex to initiate assembly of a fully functional replisome.</title>
        <authorList>
            <person name="Xi J."/>
            <person name="Zhang Z."/>
            <person name="Zhuang Z."/>
            <person name="Yang J."/>
            <person name="Spiering M.M."/>
            <person name="Hammes G.G."/>
            <person name="Benkovic S.J."/>
        </authorList>
    </citation>
    <scope>INTERACTION WITH THE DNA HELICASE ASSEMBLY PROTEIN</scope>
</reference>
<reference key="12">
    <citation type="journal article" date="2006" name="Biochemistry">
        <title>Single-molecule investigation of the T4 bacteriophage DNA polymerase holoenzyme: multiple pathways of holoenzyme formation.</title>
        <authorList>
            <person name="Smiley R.D."/>
            <person name="Zhuang Z."/>
            <person name="Benkovic S.J."/>
            <person name="Hammes G.G."/>
        </authorList>
    </citation>
    <scope>IDENTIFICATION IN THE REPLICASE COMPLEX</scope>
</reference>
<reference key="13">
    <citation type="journal article" date="1999" name="J. Biol. Chem.">
        <title>Mutational and pH studies of the 3' --&gt; 5' exonuclease activity of bacteriophage T4 DNA polymerase.</title>
        <authorList>
            <person name="Elisseeva E."/>
            <person name="Mandal S.S."/>
            <person name="Reha-Krantz L.J."/>
        </authorList>
    </citation>
    <scope>CATALYTIC ACTIVITY</scope>
</reference>
<reference key="14">
    <citation type="journal article" date="2004" name="J. Mol. Biol.">
        <title>Inactivation of the 3'-5' exonuclease of the replicative T4 DNA polymerase allows translesion DNA synthesis at an abasic site.</title>
        <authorList>
            <person name="Tanguy Le Gac N."/>
            <person name="Delagoutte E."/>
            <person name="Germain M."/>
            <person name="Villani G."/>
        </authorList>
    </citation>
    <scope>FUNCTION</scope>
    <scope>MUTAGENESIS OF ASP-219</scope>
    <scope>CATALYTIC ACTIVITY</scope>
</reference>
<reference key="15">
    <citation type="journal article" date="2010" name="Virol. J.">
        <title>Structural analysis of bacteriophage T4 DNA replication: a review in the Virology Journal series on bacteriophage T4 and its relatives.</title>
        <authorList>
            <person name="Mueser T.C."/>
            <person name="Hinerman J.M."/>
            <person name="Devos J.M."/>
            <person name="Boyer R.A."/>
            <person name="Williams K.J."/>
        </authorList>
    </citation>
    <scope>REVIEW</scope>
</reference>
<reference key="16">
    <citation type="journal article" date="2015" name="DNA Repair">
        <title>DNA polymerase 3'-&gt;5' exonuclease activity: Different roles of the beta hairpin structure in family-B DNA polymerases.</title>
        <authorList>
            <person name="Darmawan H."/>
            <person name="Harrison M."/>
            <person name="Reha-Krantz L.J."/>
        </authorList>
    </citation>
    <scope>DOMAIN</scope>
</reference>
<reference key="17">
    <citation type="journal article" date="2015" name="Viruses">
        <title>Coordinated DNA replication by the bacteriophage T4 replisome.</title>
        <authorList>
            <person name="Noble E."/>
            <person name="Spiering M.M."/>
            <person name="Benkovic S.J."/>
        </authorList>
    </citation>
    <scope>REVIEW</scope>
    <scope>SUBUNIT</scope>
</reference>
<reference key="18">
    <citation type="journal article" date="1996" name="Biochemistry">
        <title>Crystal structures of an NH2-terminal fragment of T4 DNA polymerase and its complexes with single-stranded DNA and with divalent metal ions.</title>
        <authorList>
            <person name="Wang J."/>
            <person name="Yu P."/>
            <person name="Lin T.C."/>
            <person name="Konigsberg W.H."/>
            <person name="Steitz T.A."/>
        </authorList>
    </citation>
    <scope>X-RAY CRYSTALLOGRAPHY (2.2 ANGSTROMS) OF 1-388</scope>
</reference>
<organism>
    <name type="scientific">Enterobacteria phage T4</name>
    <name type="common">Bacteriophage T4</name>
    <dbReference type="NCBI Taxonomy" id="10665"/>
    <lineage>
        <taxon>Viruses</taxon>
        <taxon>Duplodnaviria</taxon>
        <taxon>Heunggongvirae</taxon>
        <taxon>Uroviricota</taxon>
        <taxon>Caudoviricetes</taxon>
        <taxon>Straboviridae</taxon>
        <taxon>Tevenvirinae</taxon>
        <taxon>Tequatrovirus</taxon>
    </lineage>
</organism>
<sequence length="898" mass="103610">MKEFYISIETVGNNIVERYIDENGKERTREVEYLPTMFRHCKEESKYKDIYGKNCAPQKFPSMKDARDWMKRMEDIGLEALGMNDFKLAYISDTYGSEIVYDRKFVRVANCDIEVTGDKFPDPMKAEYEIDAITHYDSIDDRFYVFDLLNSMYGSVSKWDAKLAAKLDCEGGDEVPQEILDRVIYMPFDNERDMLMEYINLWEQKRPAIFTGWNIEGFDVPYIMNRVKMILGERSMKRFSPIGRVKSKLIQNMYGSKEIYSIDGVSILDYLDLYKKFAFTNLPSFSLESVAQHETKKGKLPYDGPINKLRETNHQRYISYNIIDVESVQAIDKIRGFIDLVLSMSYYAKMPFSGVMSPIKTWDAIIFNSLKGEHKVIPQQGSHVKQSFPGAFVFEPKPIARRYIMSFDLTSLYPSIIRQVNISPETIRGQFKVHPIHEYIAGTAPKPSDEYSCSPNGWMYDKHQEGIIPKEIAKVFFQRKDWKKKMFAEEMNAEAIKKIIMKGAGSCSTKPEVERYVKFSDDFLNELSNYTESVLNSLIEECEKAATLANTNQLNRKILINSLYGALGNIHFRYYDLRNATAITIFGQVGIQWIARKINEYLNKVCGTNDEDFIAAGDTDSVYVCVDKVIEKVGLDRFKEQNDLVEFMNQFGKKKMEPMIDVAYRELCDYMNNREHLMHMDREAISCPPLGSKGVGGFWKAKKRYALNVYDMEDKRFAEPHLKIMGMETQQSSTPKAVQEALEESIRRILQEGEESVQEYYKNFEKEYRQLDYKVIAEVKTANDIAKYDDKGWPGFKCPFHIRGVLTYRRAVSGLGVAPILDGNKVMVLPLREGNPFGDKCIAWPSGTELPKEIRSDVLSWIDHSTLFQKSFVKPLAGMCESAGMDYEEKASLDFLFG</sequence>
<comment type="function">
    <text evidence="1 3 4">Replicates the viral genomic DNA. This polymerase possesses two enzymatic activities: DNA synthesis (polymerase) and an exonucleolytic activity that degrades single-stranded DNA in the 3'- to 5'-direction for proofreading purpose.</text>
</comment>
<comment type="catalytic activity">
    <reaction evidence="1 3">
        <text>DNA(n) + a 2'-deoxyribonucleoside 5'-triphosphate = DNA(n+1) + diphosphate</text>
        <dbReference type="Rhea" id="RHEA:22508"/>
        <dbReference type="Rhea" id="RHEA-COMP:17339"/>
        <dbReference type="Rhea" id="RHEA-COMP:17340"/>
        <dbReference type="ChEBI" id="CHEBI:33019"/>
        <dbReference type="ChEBI" id="CHEBI:61560"/>
        <dbReference type="ChEBI" id="CHEBI:173112"/>
        <dbReference type="EC" id="2.7.7.7"/>
    </reaction>
</comment>
<comment type="cofactor">
    <cofactor evidence="1 13">
        <name>Mg(2+)</name>
        <dbReference type="ChEBI" id="CHEBI:18420"/>
    </cofactor>
</comment>
<comment type="subunit">
    <text evidence="5 6 10 12">Interacts with the polymerase clamp; this interaction constitutes the polymerase holoenzyme (PubMed:8475061, PubMed:8917503). Interacts with the helicase assembly factor (PubMed:15909989). Part of the replicase complex that includes the DNA polymerase, the polymerase clamp, the clamp loader complex, the single-stranded DNA binding protein, the primase, the helicase and the helicase assembly factor (PubMed:16800624).</text>
</comment>
<comment type="domain">
    <text evidence="1 7 8">The N-terminus contains the 3'-5' exonuclease activity (PubMed:7592876). The C-terminus contains the polymerase activity and is involved in binding to the polymerase clamp protein (PubMed:7592876). A beta hairpin structure is necessary for the proofreading function of the polymerase (PubMed:25753811).</text>
</comment>
<comment type="similarity">
    <text evidence="1">Belongs to the DNA polymerase type-B family.</text>
</comment>
<feature type="chain" id="PRO_0000046546" description="DNA-directed DNA polymerase">
    <location>
        <begin position="1"/>
        <end position="898"/>
    </location>
</feature>
<feature type="region of interest" description="3'-5'exonuclease" evidence="1 8">
    <location>
        <begin position="101"/>
        <end position="337"/>
    </location>
</feature>
<feature type="region of interest" description="Beta hairpin" evidence="1 7">
    <location>
        <begin position="245"/>
        <end position="261"/>
    </location>
</feature>
<feature type="region of interest" description="Polymerase" evidence="1 8">
    <location>
        <begin position="377"/>
        <end position="898"/>
    </location>
</feature>
<feature type="region of interest" description="Binding of DNA in B-conformation" evidence="1">
    <location>
        <begin position="702"/>
        <end position="705"/>
    </location>
</feature>
<feature type="region of interest" description="Interaction with the polymerase clamp" evidence="1 12">
    <location>
        <begin position="893"/>
        <end position="898"/>
    </location>
</feature>
<feature type="binding site" evidence="1 11">
    <location>
        <position position="112"/>
    </location>
    <ligand>
        <name>Mg(2+)</name>
        <dbReference type="ChEBI" id="CHEBI:18420"/>
        <label>1</label>
        <note>catalytic; for 3'-5' exonuclease activity</note>
    </ligand>
</feature>
<feature type="binding site" evidence="1 11">
    <location>
        <position position="114"/>
    </location>
    <ligand>
        <name>Mg(2+)</name>
        <dbReference type="ChEBI" id="CHEBI:18420"/>
        <label>1</label>
        <note>catalytic; for 3'-5' exonuclease activity</note>
    </ligand>
</feature>
<feature type="binding site" evidence="1 11">
    <location>
        <position position="219"/>
    </location>
    <ligand>
        <name>Mg(2+)</name>
        <dbReference type="ChEBI" id="CHEBI:18420"/>
        <label>2</label>
        <note>catalytic; for 3'-5' exonuclease activity</note>
    </ligand>
</feature>
<feature type="binding site" evidence="1 11">
    <location>
        <position position="324"/>
    </location>
    <ligand>
        <name>Mg(2+)</name>
        <dbReference type="ChEBI" id="CHEBI:18420"/>
        <label>1</label>
        <note>catalytic; for 3'-5' exonuclease activity</note>
    </ligand>
</feature>
<feature type="binding site" evidence="1 11">
    <location>
        <position position="324"/>
    </location>
    <ligand>
        <name>Mg(2+)</name>
        <dbReference type="ChEBI" id="CHEBI:18420"/>
        <label>2</label>
        <note>catalytic; for 3'-5' exonuclease activity</note>
    </ligand>
</feature>
<feature type="binding site" evidence="1">
    <location>
        <position position="408"/>
    </location>
    <ligand>
        <name>Mg(2+)</name>
        <dbReference type="ChEBI" id="CHEBI:18420"/>
        <label>3</label>
        <note>catalytic; for polymerase activity</note>
    </ligand>
</feature>
<feature type="binding site" evidence="1">
    <location>
        <position position="408"/>
    </location>
    <ligand>
        <name>Mg(2+)</name>
        <dbReference type="ChEBI" id="CHEBI:18420"/>
        <label>4</label>
        <note>catalytic; for polymerase activity</note>
    </ligand>
</feature>
<feature type="binding site" evidence="1">
    <location>
        <position position="409"/>
    </location>
    <ligand>
        <name>Mg(2+)</name>
        <dbReference type="ChEBI" id="CHEBI:18420"/>
        <label>4</label>
        <note>catalytic; for polymerase activity</note>
    </ligand>
</feature>
<feature type="binding site" evidence="1">
    <location>
        <begin position="411"/>
        <end position="413"/>
    </location>
    <ligand>
        <name>substrate</name>
    </ligand>
</feature>
<feature type="binding site" evidence="1">
    <location>
        <position position="479"/>
    </location>
    <ligand>
        <name>substrate</name>
    </ligand>
</feature>
<feature type="binding site" evidence="1">
    <location>
        <position position="557"/>
    </location>
    <ligand>
        <name>substrate</name>
    </ligand>
</feature>
<feature type="binding site" evidence="1">
    <location>
        <position position="620"/>
    </location>
    <ligand>
        <name>Mg(2+)</name>
        <dbReference type="ChEBI" id="CHEBI:18420"/>
        <label>3</label>
        <note>catalytic; for polymerase activity</note>
    </ligand>
</feature>
<feature type="binding site" evidence="1">
    <location>
        <position position="620"/>
    </location>
    <ligand>
        <name>Mg(2+)</name>
        <dbReference type="ChEBI" id="CHEBI:18420"/>
        <label>4</label>
        <note>catalytic; for polymerase activity</note>
    </ligand>
</feature>
<feature type="site" description="Optimization of metal coordination by the polymerase active site" evidence="1">
    <location>
        <position position="618"/>
    </location>
</feature>
<feature type="site" description="Optimization of metal coordination by the polymerase active site" evidence="1">
    <location>
        <position position="703"/>
    </location>
</feature>
<feature type="site" description="Essential for viral replication" evidence="1">
    <location>
        <position position="711"/>
    </location>
</feature>
<feature type="mutagenesis site" description="Almost complete loss of exonuclease activity. Decreased replication fidelity." evidence="9">
    <original>D</original>
    <variation>A</variation>
    <location>
        <position position="112"/>
    </location>
</feature>
<feature type="mutagenesis site" description="Almost complete loss of exonuclease activity. Decreased replication fidelity." evidence="9">
    <original>E</original>
    <variation>A</variation>
    <location>
        <position position="114"/>
    </location>
</feature>
<feature type="mutagenesis site" description="Almost complete loss of exonuclease activity. Decreased replication fidelity." evidence="4 9">
    <original>D</original>
    <variation>A</variation>
    <location>
        <position position="219"/>
    </location>
</feature>
<feature type="mutagenesis site" description="Almost complete loss of exonuclease activity. Decreased replication fidelity." evidence="9">
    <original>D</original>
    <variation>A</variation>
    <location>
        <position position="324"/>
    </location>
</feature>
<feature type="sequence conflict" description="In Ref. 2; CAA25344." evidence="14" ref="2">
    <original>A</original>
    <variation>V</variation>
    <location>
        <position position="89"/>
    </location>
</feature>
<feature type="strand" evidence="15">
    <location>
        <begin position="4"/>
        <end position="11"/>
    </location>
</feature>
<feature type="strand" evidence="15">
    <location>
        <begin position="14"/>
        <end position="20"/>
    </location>
</feature>
<feature type="strand" evidence="15">
    <location>
        <begin position="26"/>
        <end position="32"/>
    </location>
</feature>
<feature type="strand" evidence="15">
    <location>
        <begin position="36"/>
        <end position="38"/>
    </location>
</feature>
<feature type="helix" evidence="15">
    <location>
        <begin position="40"/>
        <end position="43"/>
    </location>
</feature>
<feature type="turn" evidence="15">
    <location>
        <begin position="49"/>
        <end position="52"/>
    </location>
</feature>
<feature type="helix" evidence="15">
    <location>
        <begin position="63"/>
        <end position="76"/>
    </location>
</feature>
<feature type="helix" evidence="15">
    <location>
        <begin position="82"/>
        <end position="94"/>
    </location>
</feature>
<feature type="helix" evidence="15">
    <location>
        <begin position="103"/>
        <end position="105"/>
    </location>
</feature>
<feature type="strand" evidence="15">
    <location>
        <begin position="108"/>
        <end position="115"/>
    </location>
</feature>
<feature type="turn" evidence="15">
    <location>
        <begin position="123"/>
        <end position="125"/>
    </location>
</feature>
<feature type="strand" evidence="15">
    <location>
        <begin position="130"/>
        <end position="137"/>
    </location>
</feature>
<feature type="turn" evidence="15">
    <location>
        <begin position="138"/>
        <end position="141"/>
    </location>
</feature>
<feature type="strand" evidence="15">
    <location>
        <begin position="142"/>
        <end position="148"/>
    </location>
</feature>
<feature type="strand" evidence="16">
    <location>
        <begin position="150"/>
        <end position="153"/>
    </location>
</feature>
<feature type="helix" evidence="15">
    <location>
        <begin position="161"/>
        <end position="165"/>
    </location>
</feature>
<feature type="helix" evidence="15">
    <location>
        <begin position="168"/>
        <end position="170"/>
    </location>
</feature>
<feature type="helix" evidence="15">
    <location>
        <begin position="177"/>
        <end position="180"/>
    </location>
</feature>
<feature type="strand" evidence="15">
    <location>
        <begin position="183"/>
        <end position="189"/>
    </location>
</feature>
<feature type="helix" evidence="15">
    <location>
        <begin position="191"/>
        <end position="204"/>
    </location>
</feature>
<feature type="strand" evidence="15">
    <location>
        <begin position="208"/>
        <end position="211"/>
    </location>
</feature>
<feature type="turn" evidence="15">
    <location>
        <begin position="215"/>
        <end position="218"/>
    </location>
</feature>
<feature type="helix" evidence="15">
    <location>
        <begin position="219"/>
        <end position="236"/>
    </location>
</feature>
<feature type="helix" evidence="15">
    <location>
        <begin position="237"/>
        <end position="239"/>
    </location>
</feature>
<feature type="strand" evidence="15">
    <location>
        <begin position="245"/>
        <end position="249"/>
    </location>
</feature>
<feature type="helix" evidence="15">
    <location>
        <begin position="252"/>
        <end position="254"/>
    </location>
</feature>
<feature type="strand" evidence="15">
    <location>
        <begin position="258"/>
        <end position="262"/>
    </location>
</feature>
<feature type="strand" evidence="15">
    <location>
        <begin position="265"/>
        <end position="267"/>
    </location>
</feature>
<feature type="helix" evidence="15">
    <location>
        <begin position="270"/>
        <end position="277"/>
    </location>
</feature>
<feature type="helix" evidence="15">
    <location>
        <begin position="287"/>
        <end position="295"/>
    </location>
</feature>
<feature type="helix" evidence="15">
    <location>
        <begin position="306"/>
        <end position="308"/>
    </location>
</feature>
<feature type="helix" evidence="15">
    <location>
        <begin position="309"/>
        <end position="335"/>
    </location>
</feature>
<feature type="helix" evidence="15">
    <location>
        <begin position="337"/>
        <end position="348"/>
    </location>
</feature>
<feature type="helix" evidence="15">
    <location>
        <begin position="352"/>
        <end position="356"/>
    </location>
</feature>
<feature type="helix" evidence="15">
    <location>
        <begin position="358"/>
        <end position="369"/>
    </location>
</feature>
<evidence type="ECO:0000255" key="1">
    <source>
        <dbReference type="HAMAP-Rule" id="MF_04100"/>
    </source>
</evidence>
<evidence type="ECO:0000269" key="2">
    <source>
    </source>
</evidence>
<evidence type="ECO:0000269" key="3">
    <source>
    </source>
</evidence>
<evidence type="ECO:0000269" key="4">
    <source>
    </source>
</evidence>
<evidence type="ECO:0000269" key="5">
    <source>
    </source>
</evidence>
<evidence type="ECO:0000269" key="6">
    <source>
    </source>
</evidence>
<evidence type="ECO:0000269" key="7">
    <source>
    </source>
</evidence>
<evidence type="ECO:0000269" key="8">
    <source>
    </source>
</evidence>
<evidence type="ECO:0000269" key="9">
    <source>
    </source>
</evidence>
<evidence type="ECO:0000269" key="10">
    <source>
    </source>
</evidence>
<evidence type="ECO:0000269" key="11">
    <source>
    </source>
</evidence>
<evidence type="ECO:0000269" key="12">
    <source>
    </source>
</evidence>
<evidence type="ECO:0000269" key="13">
    <source>
    </source>
</evidence>
<evidence type="ECO:0000305" key="14"/>
<evidence type="ECO:0007829" key="15">
    <source>
        <dbReference type="PDB" id="1NOY"/>
    </source>
</evidence>
<evidence type="ECO:0007829" key="16">
    <source>
        <dbReference type="PDB" id="1NOZ"/>
    </source>
</evidence>
<organismHost>
    <name type="scientific">Escherichia coli</name>
    <dbReference type="NCBI Taxonomy" id="562"/>
</organismHost>
<protein>
    <recommendedName>
        <fullName evidence="1">DNA-directed DNA polymerase</fullName>
        <ecNumber evidence="1 3">2.7.7.7</ecNumber>
        <ecNumber evidence="1 2 3 4 9">3.1.11.-</ecNumber>
    </recommendedName>
    <alternativeName>
        <fullName>Gene product 43</fullName>
        <shortName>Gp43</shortName>
    </alternativeName>
</protein>
<dbReference type="EC" id="2.7.7.7" evidence="1 3"/>
<dbReference type="EC" id="3.1.11.-" evidence="1 2 3 4 9"/>
<dbReference type="EMBL" id="M10160">
    <property type="protein sequence ID" value="AAC05397.1"/>
    <property type="molecule type" value="Genomic_DNA"/>
</dbReference>
<dbReference type="EMBL" id="X00769">
    <property type="protein sequence ID" value="CAA25344.1"/>
    <property type="molecule type" value="Genomic_DNA"/>
</dbReference>
<dbReference type="EMBL" id="AF158101">
    <property type="protein sequence ID" value="AAD42468.1"/>
    <property type="molecule type" value="Genomic_DNA"/>
</dbReference>
<dbReference type="EMBL" id="M37159">
    <property type="protein sequence ID" value="AAA21706.1"/>
    <property type="molecule type" value="Genomic_DNA"/>
</dbReference>
<dbReference type="PIR" id="JS0791">
    <property type="entry name" value="DJBPT4"/>
</dbReference>
<dbReference type="RefSeq" id="NP_049662.1">
    <property type="nucleotide sequence ID" value="NC_000866.4"/>
</dbReference>
<dbReference type="PDB" id="1NOY">
    <property type="method" value="X-ray"/>
    <property type="resolution" value="2.20 A"/>
    <property type="chains" value="A/B=1-388"/>
</dbReference>
<dbReference type="PDB" id="1NOZ">
    <property type="method" value="X-ray"/>
    <property type="resolution" value="2.20 A"/>
    <property type="chains" value="A/B=1-388"/>
</dbReference>
<dbReference type="PDBsum" id="1NOY"/>
<dbReference type="PDBsum" id="1NOZ"/>
<dbReference type="SMR" id="P04415"/>
<dbReference type="BindingDB" id="P04415"/>
<dbReference type="ChEMBL" id="CHEMBL5946"/>
<dbReference type="GeneID" id="1258685"/>
<dbReference type="KEGG" id="vg:1258685"/>
<dbReference type="OrthoDB" id="165at10239"/>
<dbReference type="BRENDA" id="2.7.7.7">
    <property type="organism ID" value="732"/>
</dbReference>
<dbReference type="SABIO-RK" id="P04415"/>
<dbReference type="EvolutionaryTrace" id="P04415"/>
<dbReference type="PRO" id="PR:P04415"/>
<dbReference type="Proteomes" id="UP000009087">
    <property type="component" value="Segment"/>
</dbReference>
<dbReference type="GO" id="GO:0008408">
    <property type="term" value="F:3'-5' exonuclease activity"/>
    <property type="evidence" value="ECO:0000314"/>
    <property type="project" value="UniProtKB"/>
</dbReference>
<dbReference type="GO" id="GO:0003677">
    <property type="term" value="F:DNA binding"/>
    <property type="evidence" value="ECO:0007669"/>
    <property type="project" value="UniProtKB-UniRule"/>
</dbReference>
<dbReference type="GO" id="GO:0003887">
    <property type="term" value="F:DNA-directed DNA polymerase activity"/>
    <property type="evidence" value="ECO:0000314"/>
    <property type="project" value="UniProtKB"/>
</dbReference>
<dbReference type="GO" id="GO:0046872">
    <property type="term" value="F:metal ion binding"/>
    <property type="evidence" value="ECO:0007669"/>
    <property type="project" value="UniProtKB-KW"/>
</dbReference>
<dbReference type="GO" id="GO:0000166">
    <property type="term" value="F:nucleotide binding"/>
    <property type="evidence" value="ECO:0007669"/>
    <property type="project" value="UniProtKB-UniRule"/>
</dbReference>
<dbReference type="GO" id="GO:0039686">
    <property type="term" value="P:bidirectional double-stranded viral DNA replication"/>
    <property type="evidence" value="ECO:0000314"/>
    <property type="project" value="UniProtKB"/>
</dbReference>
<dbReference type="GO" id="GO:0006261">
    <property type="term" value="P:DNA-templated DNA replication"/>
    <property type="evidence" value="ECO:0007669"/>
    <property type="project" value="TreeGrafter"/>
</dbReference>
<dbReference type="FunFam" id="3.30.420.10:FF:000072">
    <property type="entry name" value="DNA-directed DNA polymerase"/>
    <property type="match status" value="1"/>
</dbReference>
<dbReference type="Gene3D" id="1.20.1280.300">
    <property type="match status" value="1"/>
</dbReference>
<dbReference type="Gene3D" id="3.30.342.10">
    <property type="entry name" value="DNA Polymerase, chain B, domain 1"/>
    <property type="match status" value="1"/>
</dbReference>
<dbReference type="Gene3D" id="3.40.1820.10">
    <property type="entry name" value="DnaQ-like 3'-5' exonuclease"/>
    <property type="match status" value="1"/>
</dbReference>
<dbReference type="Gene3D" id="1.10.287.690">
    <property type="entry name" value="Helix hairpin bin"/>
    <property type="match status" value="1"/>
</dbReference>
<dbReference type="Gene3D" id="3.90.1600.10">
    <property type="entry name" value="Palm domain of DNA polymerase"/>
    <property type="match status" value="1"/>
</dbReference>
<dbReference type="Gene3D" id="3.30.420.10">
    <property type="entry name" value="Ribonuclease H-like superfamily/Ribonuclease H"/>
    <property type="match status" value="1"/>
</dbReference>
<dbReference type="HAMAP" id="MF_04100">
    <property type="entry name" value="DPOL_T4"/>
    <property type="match status" value="1"/>
</dbReference>
<dbReference type="InterPro" id="IPR006172">
    <property type="entry name" value="DNA-dir_DNA_pol_B"/>
</dbReference>
<dbReference type="InterPro" id="IPR017964">
    <property type="entry name" value="DNA-dir_DNA_pol_B_CS"/>
</dbReference>
<dbReference type="InterPro" id="IPR006133">
    <property type="entry name" value="DNA-dir_DNA_pol_B_exonuc"/>
</dbReference>
<dbReference type="InterPro" id="IPR006134">
    <property type="entry name" value="DNA-dir_DNA_pol_B_multi_dom"/>
</dbReference>
<dbReference type="InterPro" id="IPR043502">
    <property type="entry name" value="DNA/RNA_pol_sf"/>
</dbReference>
<dbReference type="InterPro" id="IPR023211">
    <property type="entry name" value="DNA_pol_palm_dom_sf"/>
</dbReference>
<dbReference type="InterPro" id="IPR050240">
    <property type="entry name" value="DNA_pol_type-B"/>
</dbReference>
<dbReference type="InterPro" id="IPR034749">
    <property type="entry name" value="DPOL_T4"/>
</dbReference>
<dbReference type="InterPro" id="IPR012337">
    <property type="entry name" value="RNaseH-like_sf"/>
</dbReference>
<dbReference type="InterPro" id="IPR036397">
    <property type="entry name" value="RNaseH_sf"/>
</dbReference>
<dbReference type="PANTHER" id="PTHR10322">
    <property type="entry name" value="DNA POLYMERASE CATALYTIC SUBUNIT"/>
    <property type="match status" value="1"/>
</dbReference>
<dbReference type="PANTHER" id="PTHR10322:SF23">
    <property type="entry name" value="DNA POLYMERASE DELTA CATALYTIC SUBUNIT"/>
    <property type="match status" value="1"/>
</dbReference>
<dbReference type="Pfam" id="PF00136">
    <property type="entry name" value="DNA_pol_B"/>
    <property type="match status" value="2"/>
</dbReference>
<dbReference type="Pfam" id="PF03104">
    <property type="entry name" value="DNA_pol_B_exo1"/>
    <property type="match status" value="1"/>
</dbReference>
<dbReference type="PRINTS" id="PR00106">
    <property type="entry name" value="DNAPOLB"/>
</dbReference>
<dbReference type="SMART" id="SM00486">
    <property type="entry name" value="POLBc"/>
    <property type="match status" value="1"/>
</dbReference>
<dbReference type="SUPFAM" id="SSF56672">
    <property type="entry name" value="DNA/RNA polymerases"/>
    <property type="match status" value="1"/>
</dbReference>
<dbReference type="SUPFAM" id="SSF53098">
    <property type="entry name" value="Ribonuclease H-like"/>
    <property type="match status" value="1"/>
</dbReference>
<dbReference type="PROSITE" id="PS00116">
    <property type="entry name" value="DNA_POLYMERASE_B"/>
    <property type="match status" value="1"/>
</dbReference>
<gene>
    <name type="primary">43</name>
</gene>
<name>DPOL_BPT4</name>
<proteinExistence type="evidence at protein level"/>
<accession>P04415</accession>